<gene>
    <name evidence="1" type="primary">rpsK</name>
    <name type="ordered locus">Gmet_0651</name>
</gene>
<proteinExistence type="inferred from homology"/>
<name>RS11_GEOMG</name>
<feature type="chain" id="PRO_0000230403" description="Small ribosomal subunit protein uS11">
    <location>
        <begin position="1"/>
        <end position="131"/>
    </location>
</feature>
<organism>
    <name type="scientific">Geobacter metallireducens (strain ATCC 53774 / DSM 7210 / GS-15)</name>
    <dbReference type="NCBI Taxonomy" id="269799"/>
    <lineage>
        <taxon>Bacteria</taxon>
        <taxon>Pseudomonadati</taxon>
        <taxon>Thermodesulfobacteriota</taxon>
        <taxon>Desulfuromonadia</taxon>
        <taxon>Geobacterales</taxon>
        <taxon>Geobacteraceae</taxon>
        <taxon>Geobacter</taxon>
    </lineage>
</organism>
<comment type="function">
    <text evidence="1">Located on the platform of the 30S subunit, it bridges several disparate RNA helices of the 16S rRNA. Forms part of the Shine-Dalgarno cleft in the 70S ribosome.</text>
</comment>
<comment type="subunit">
    <text evidence="1">Part of the 30S ribosomal subunit. Interacts with proteins S7 and S18. Binds to IF-3.</text>
</comment>
<comment type="similarity">
    <text evidence="1">Belongs to the universal ribosomal protein uS11 family.</text>
</comment>
<sequence length="131" mass="14015">MASPAKKVVKKKKEKKNIPNGVAHIQATFNNTIITITDPAGNVVAWSSAGGKGFKGSRKSTPFAAQVAAEDCAKKAQDHGMRSVEVYVKGPGSGRESALRALQAAGFHVNFIRDVTPIPHNGCRPPKRRRV</sequence>
<dbReference type="EMBL" id="CP000148">
    <property type="protein sequence ID" value="ABB30893.1"/>
    <property type="molecule type" value="Genomic_DNA"/>
</dbReference>
<dbReference type="RefSeq" id="WP_011365705.1">
    <property type="nucleotide sequence ID" value="NC_007517.1"/>
</dbReference>
<dbReference type="SMR" id="Q39XY1"/>
<dbReference type="STRING" id="269799.Gmet_0651"/>
<dbReference type="KEGG" id="gme:Gmet_0651"/>
<dbReference type="eggNOG" id="COG0100">
    <property type="taxonomic scope" value="Bacteria"/>
</dbReference>
<dbReference type="HOGENOM" id="CLU_072439_5_0_7"/>
<dbReference type="Proteomes" id="UP000007073">
    <property type="component" value="Chromosome"/>
</dbReference>
<dbReference type="GO" id="GO:1990904">
    <property type="term" value="C:ribonucleoprotein complex"/>
    <property type="evidence" value="ECO:0007669"/>
    <property type="project" value="UniProtKB-KW"/>
</dbReference>
<dbReference type="GO" id="GO:0005840">
    <property type="term" value="C:ribosome"/>
    <property type="evidence" value="ECO:0007669"/>
    <property type="project" value="UniProtKB-KW"/>
</dbReference>
<dbReference type="GO" id="GO:0019843">
    <property type="term" value="F:rRNA binding"/>
    <property type="evidence" value="ECO:0007669"/>
    <property type="project" value="UniProtKB-UniRule"/>
</dbReference>
<dbReference type="GO" id="GO:0003735">
    <property type="term" value="F:structural constituent of ribosome"/>
    <property type="evidence" value="ECO:0007669"/>
    <property type="project" value="InterPro"/>
</dbReference>
<dbReference type="GO" id="GO:0006412">
    <property type="term" value="P:translation"/>
    <property type="evidence" value="ECO:0007669"/>
    <property type="project" value="UniProtKB-UniRule"/>
</dbReference>
<dbReference type="FunFam" id="3.30.420.80:FF:000001">
    <property type="entry name" value="30S ribosomal protein S11"/>
    <property type="match status" value="1"/>
</dbReference>
<dbReference type="Gene3D" id="3.30.420.80">
    <property type="entry name" value="Ribosomal protein S11"/>
    <property type="match status" value="1"/>
</dbReference>
<dbReference type="HAMAP" id="MF_01310">
    <property type="entry name" value="Ribosomal_uS11"/>
    <property type="match status" value="1"/>
</dbReference>
<dbReference type="InterPro" id="IPR001971">
    <property type="entry name" value="Ribosomal_uS11"/>
</dbReference>
<dbReference type="InterPro" id="IPR019981">
    <property type="entry name" value="Ribosomal_uS11_bac-type"/>
</dbReference>
<dbReference type="InterPro" id="IPR018102">
    <property type="entry name" value="Ribosomal_uS11_CS"/>
</dbReference>
<dbReference type="InterPro" id="IPR036967">
    <property type="entry name" value="Ribosomal_uS11_sf"/>
</dbReference>
<dbReference type="NCBIfam" id="NF003698">
    <property type="entry name" value="PRK05309.1"/>
    <property type="match status" value="1"/>
</dbReference>
<dbReference type="NCBIfam" id="TIGR03632">
    <property type="entry name" value="uS11_bact"/>
    <property type="match status" value="1"/>
</dbReference>
<dbReference type="PANTHER" id="PTHR11759">
    <property type="entry name" value="40S RIBOSOMAL PROTEIN S14/30S RIBOSOMAL PROTEIN S11"/>
    <property type="match status" value="1"/>
</dbReference>
<dbReference type="Pfam" id="PF00411">
    <property type="entry name" value="Ribosomal_S11"/>
    <property type="match status" value="1"/>
</dbReference>
<dbReference type="PIRSF" id="PIRSF002131">
    <property type="entry name" value="Ribosomal_S11"/>
    <property type="match status" value="1"/>
</dbReference>
<dbReference type="SUPFAM" id="SSF53137">
    <property type="entry name" value="Translational machinery components"/>
    <property type="match status" value="1"/>
</dbReference>
<dbReference type="PROSITE" id="PS00054">
    <property type="entry name" value="RIBOSOMAL_S11"/>
    <property type="match status" value="1"/>
</dbReference>
<protein>
    <recommendedName>
        <fullName evidence="1">Small ribosomal subunit protein uS11</fullName>
    </recommendedName>
    <alternativeName>
        <fullName evidence="2">30S ribosomal protein S11</fullName>
    </alternativeName>
</protein>
<keyword id="KW-1185">Reference proteome</keyword>
<keyword id="KW-0687">Ribonucleoprotein</keyword>
<keyword id="KW-0689">Ribosomal protein</keyword>
<keyword id="KW-0694">RNA-binding</keyword>
<keyword id="KW-0699">rRNA-binding</keyword>
<accession>Q39XY1</accession>
<reference key="1">
    <citation type="journal article" date="2009" name="BMC Microbiol.">
        <title>The genome sequence of Geobacter metallireducens: features of metabolism, physiology and regulation common and dissimilar to Geobacter sulfurreducens.</title>
        <authorList>
            <person name="Aklujkar M."/>
            <person name="Krushkal J."/>
            <person name="DiBartolo G."/>
            <person name="Lapidus A."/>
            <person name="Land M.L."/>
            <person name="Lovley D.R."/>
        </authorList>
    </citation>
    <scope>NUCLEOTIDE SEQUENCE [LARGE SCALE GENOMIC DNA]</scope>
    <source>
        <strain>ATCC 53774 / DSM 7210 / GS-15</strain>
    </source>
</reference>
<evidence type="ECO:0000255" key="1">
    <source>
        <dbReference type="HAMAP-Rule" id="MF_01310"/>
    </source>
</evidence>
<evidence type="ECO:0000305" key="2"/>